<gene>
    <name evidence="1" type="primary">hutH</name>
    <name type="ordered locus">YPTB3851</name>
</gene>
<accession>Q664B8</accession>
<proteinExistence type="inferred from homology"/>
<comment type="catalytic activity">
    <reaction evidence="1">
        <text>L-histidine = trans-urocanate + NH4(+)</text>
        <dbReference type="Rhea" id="RHEA:21232"/>
        <dbReference type="ChEBI" id="CHEBI:17771"/>
        <dbReference type="ChEBI" id="CHEBI:28938"/>
        <dbReference type="ChEBI" id="CHEBI:57595"/>
        <dbReference type="EC" id="4.3.1.3"/>
    </reaction>
</comment>
<comment type="pathway">
    <text evidence="1">Amino-acid degradation; L-histidine degradation into L-glutamate; N-formimidoyl-L-glutamate from L-histidine: step 1/3.</text>
</comment>
<comment type="subcellular location">
    <subcellularLocation>
        <location evidence="1">Cytoplasm</location>
    </subcellularLocation>
</comment>
<comment type="PTM">
    <text evidence="1">Contains an active site 4-methylidene-imidazol-5-one (MIO), which is formed autocatalytically by cyclization and dehydration of residues Ala-Ser-Gly.</text>
</comment>
<comment type="similarity">
    <text evidence="1">Belongs to the PAL/histidase family.</text>
</comment>
<feature type="chain" id="PRO_0000161054" description="Histidine ammonia-lyase">
    <location>
        <begin position="1"/>
        <end position="510"/>
    </location>
</feature>
<feature type="modified residue" description="2,3-didehydroalanine (Ser)" evidence="1">
    <location>
        <position position="144"/>
    </location>
</feature>
<feature type="cross-link" description="5-imidazolinone (Ala-Gly)" evidence="1">
    <location>
        <begin position="143"/>
        <end position="145"/>
    </location>
</feature>
<name>HUTH_YERPS</name>
<keyword id="KW-0963">Cytoplasm</keyword>
<keyword id="KW-0369">Histidine metabolism</keyword>
<keyword id="KW-0456">Lyase</keyword>
<dbReference type="EC" id="4.3.1.3" evidence="1"/>
<dbReference type="EMBL" id="BX936398">
    <property type="protein sequence ID" value="CAH23089.1"/>
    <property type="molecule type" value="Genomic_DNA"/>
</dbReference>
<dbReference type="RefSeq" id="WP_011193293.1">
    <property type="nucleotide sequence ID" value="NC_006155.1"/>
</dbReference>
<dbReference type="SMR" id="Q664B8"/>
<dbReference type="GeneID" id="49784148"/>
<dbReference type="KEGG" id="ypo:BZ17_2730"/>
<dbReference type="KEGG" id="yps:YPTB3851"/>
<dbReference type="PATRIC" id="fig|273123.14.peg.2862"/>
<dbReference type="UniPathway" id="UPA00379">
    <property type="reaction ID" value="UER00549"/>
</dbReference>
<dbReference type="Proteomes" id="UP000001011">
    <property type="component" value="Chromosome"/>
</dbReference>
<dbReference type="GO" id="GO:0005737">
    <property type="term" value="C:cytoplasm"/>
    <property type="evidence" value="ECO:0007669"/>
    <property type="project" value="UniProtKB-SubCell"/>
</dbReference>
<dbReference type="GO" id="GO:0004397">
    <property type="term" value="F:histidine ammonia-lyase activity"/>
    <property type="evidence" value="ECO:0007669"/>
    <property type="project" value="UniProtKB-UniRule"/>
</dbReference>
<dbReference type="GO" id="GO:0019556">
    <property type="term" value="P:L-histidine catabolic process to glutamate and formamide"/>
    <property type="evidence" value="ECO:0007669"/>
    <property type="project" value="UniProtKB-UniPathway"/>
</dbReference>
<dbReference type="GO" id="GO:0019557">
    <property type="term" value="P:L-histidine catabolic process to glutamate and formate"/>
    <property type="evidence" value="ECO:0007669"/>
    <property type="project" value="UniProtKB-UniPathway"/>
</dbReference>
<dbReference type="CDD" id="cd00332">
    <property type="entry name" value="PAL-HAL"/>
    <property type="match status" value="1"/>
</dbReference>
<dbReference type="FunFam" id="1.10.275.10:FF:000005">
    <property type="entry name" value="Histidine ammonia-lyase"/>
    <property type="match status" value="1"/>
</dbReference>
<dbReference type="FunFam" id="1.20.200.10:FF:000003">
    <property type="entry name" value="Histidine ammonia-lyase"/>
    <property type="match status" value="1"/>
</dbReference>
<dbReference type="Gene3D" id="1.20.200.10">
    <property type="entry name" value="Fumarase/aspartase (Central domain)"/>
    <property type="match status" value="1"/>
</dbReference>
<dbReference type="Gene3D" id="1.10.275.10">
    <property type="entry name" value="Fumarase/aspartase (N-terminal domain)"/>
    <property type="match status" value="1"/>
</dbReference>
<dbReference type="HAMAP" id="MF_00229">
    <property type="entry name" value="His_ammonia_lyase"/>
    <property type="match status" value="1"/>
</dbReference>
<dbReference type="InterPro" id="IPR001106">
    <property type="entry name" value="Aromatic_Lyase"/>
</dbReference>
<dbReference type="InterPro" id="IPR024083">
    <property type="entry name" value="Fumarase/histidase_N"/>
</dbReference>
<dbReference type="InterPro" id="IPR005921">
    <property type="entry name" value="HutH"/>
</dbReference>
<dbReference type="InterPro" id="IPR008948">
    <property type="entry name" value="L-Aspartase-like"/>
</dbReference>
<dbReference type="InterPro" id="IPR022313">
    <property type="entry name" value="Phe/His_NH3-lyase_AS"/>
</dbReference>
<dbReference type="NCBIfam" id="TIGR01225">
    <property type="entry name" value="hutH"/>
    <property type="match status" value="1"/>
</dbReference>
<dbReference type="NCBIfam" id="NF006871">
    <property type="entry name" value="PRK09367.1"/>
    <property type="match status" value="1"/>
</dbReference>
<dbReference type="PANTHER" id="PTHR10362">
    <property type="entry name" value="HISTIDINE AMMONIA-LYASE"/>
    <property type="match status" value="1"/>
</dbReference>
<dbReference type="Pfam" id="PF00221">
    <property type="entry name" value="Lyase_aromatic"/>
    <property type="match status" value="1"/>
</dbReference>
<dbReference type="SUPFAM" id="SSF48557">
    <property type="entry name" value="L-aspartase-like"/>
    <property type="match status" value="1"/>
</dbReference>
<dbReference type="PROSITE" id="PS00488">
    <property type="entry name" value="PAL_HISTIDASE"/>
    <property type="match status" value="1"/>
</dbReference>
<evidence type="ECO:0000255" key="1">
    <source>
        <dbReference type="HAMAP-Rule" id="MF_00229"/>
    </source>
</evidence>
<organism>
    <name type="scientific">Yersinia pseudotuberculosis serotype I (strain IP32953)</name>
    <dbReference type="NCBI Taxonomy" id="273123"/>
    <lineage>
        <taxon>Bacteria</taxon>
        <taxon>Pseudomonadati</taxon>
        <taxon>Pseudomonadota</taxon>
        <taxon>Gammaproteobacteria</taxon>
        <taxon>Enterobacterales</taxon>
        <taxon>Yersiniaceae</taxon>
        <taxon>Yersinia</taxon>
    </lineage>
</organism>
<sequence>MKTITLRPGQMTLADLRHIYQHPVHITLDESAYVPIQQSVDCVQAILAEQRTAYGINTGFGLLASTRIATEDLENLQRSIVLSHAAGVGEANDDAIVRLIMVLKINSLARGFSGIRLEVIQALITLVNAGVYPHIPLKGSVGASGDLAPLAHMSLLLLGEGKARYQGEWLPAHTALAQAGLQPLTLAAKEGLALLNGTQVSAAYALRGLFEAEDLYAAASVFGCLTVDAALGSRSPFDARIHAVRGQRGQIDAASTYRHLLGERSEISESHKNCDKVQDPYSLRCQPQVMGACLGQIRQAAEVLAIESNAVSDNPLVFAEQGDVLSGGNFHAEPVAMAADNLALALAEIGSLSECRISLMMDKHMSQLPPFLVENGGVNSGFMIAQVTAAALTSENKGLAFPASVDSIPTSANQEDHVSMAPRAGKRLWEMAENVRNILAIEWLAACQGLDLRKGLRTSAILEPARQLLRQHVTYYDKDRFFAPDIEVASQLIAQRHMNELMPAKLLPSL</sequence>
<protein>
    <recommendedName>
        <fullName evidence="1">Histidine ammonia-lyase</fullName>
        <shortName evidence="1">Histidase</shortName>
        <ecNumber evidence="1">4.3.1.3</ecNumber>
    </recommendedName>
</protein>
<reference key="1">
    <citation type="journal article" date="2004" name="Proc. Natl. Acad. Sci. U.S.A.">
        <title>Insights into the evolution of Yersinia pestis through whole-genome comparison with Yersinia pseudotuberculosis.</title>
        <authorList>
            <person name="Chain P.S.G."/>
            <person name="Carniel E."/>
            <person name="Larimer F.W."/>
            <person name="Lamerdin J."/>
            <person name="Stoutland P.O."/>
            <person name="Regala W.M."/>
            <person name="Georgescu A.M."/>
            <person name="Vergez L.M."/>
            <person name="Land M.L."/>
            <person name="Motin V.L."/>
            <person name="Brubaker R.R."/>
            <person name="Fowler J."/>
            <person name="Hinnebusch J."/>
            <person name="Marceau M."/>
            <person name="Medigue C."/>
            <person name="Simonet M."/>
            <person name="Chenal-Francisque V."/>
            <person name="Souza B."/>
            <person name="Dacheux D."/>
            <person name="Elliott J.M."/>
            <person name="Derbise A."/>
            <person name="Hauser L.J."/>
            <person name="Garcia E."/>
        </authorList>
    </citation>
    <scope>NUCLEOTIDE SEQUENCE [LARGE SCALE GENOMIC DNA]</scope>
    <source>
        <strain>IP32953</strain>
    </source>
</reference>